<reference key="1">
    <citation type="journal article" date="2008" name="J. Bacteriol.">
        <title>Genome sequence of Staphylococcus aureus strain Newman and comparative analysis of staphylococcal genomes: polymorphism and evolution of two major pathogenicity islands.</title>
        <authorList>
            <person name="Baba T."/>
            <person name="Bae T."/>
            <person name="Schneewind O."/>
            <person name="Takeuchi F."/>
            <person name="Hiramatsu K."/>
        </authorList>
    </citation>
    <scope>NUCLEOTIDE SEQUENCE [LARGE SCALE GENOMIC DNA]</scope>
    <source>
        <strain>Newman</strain>
    </source>
</reference>
<evidence type="ECO:0000255" key="1">
    <source>
        <dbReference type="HAMAP-Rule" id="MF_00076"/>
    </source>
</evidence>
<protein>
    <recommendedName>
        <fullName evidence="1">Imidazoleglycerol-phosphate dehydratase</fullName>
        <shortName evidence="1">IGPD</shortName>
        <ecNumber evidence="1">4.2.1.19</ecNumber>
    </recommendedName>
</protein>
<proteinExistence type="inferred from homology"/>
<feature type="chain" id="PRO_1000071205" description="Imidazoleglycerol-phosphate dehydratase">
    <location>
        <begin position="1"/>
        <end position="192"/>
    </location>
</feature>
<sequence length="192" mass="21456">MIYQKQRNTAETQLNISISDDQSPSHINTGVGFLNHMLTLFTFHSGLSLNIEAQGDIDVDDHHVTEDIGIVIGQLLLEMIKDKKHFVRYGTMYIPMDETLARVVVDISGRPYLSFNASLSKEKVGTFDTELVEEFFRAVVINARLTTHIDLIRGGNTHHEIEAIFKAFSRALGIALTATDDQRVPSSKGVIE</sequence>
<dbReference type="EC" id="4.2.1.19" evidence="1"/>
<dbReference type="EMBL" id="AP009351">
    <property type="protein sequence ID" value="BAF68846.1"/>
    <property type="molecule type" value="Genomic_DNA"/>
</dbReference>
<dbReference type="RefSeq" id="WP_000640266.1">
    <property type="nucleotide sequence ID" value="NZ_JBBIAE010000005.1"/>
</dbReference>
<dbReference type="SMR" id="A6QKG4"/>
<dbReference type="KEGG" id="sae:NWMN_2574"/>
<dbReference type="HOGENOM" id="CLU_044308_3_0_9"/>
<dbReference type="UniPathway" id="UPA00031">
    <property type="reaction ID" value="UER00011"/>
</dbReference>
<dbReference type="Proteomes" id="UP000006386">
    <property type="component" value="Chromosome"/>
</dbReference>
<dbReference type="GO" id="GO:0005737">
    <property type="term" value="C:cytoplasm"/>
    <property type="evidence" value="ECO:0007669"/>
    <property type="project" value="UniProtKB-SubCell"/>
</dbReference>
<dbReference type="GO" id="GO:0004424">
    <property type="term" value="F:imidazoleglycerol-phosphate dehydratase activity"/>
    <property type="evidence" value="ECO:0007669"/>
    <property type="project" value="UniProtKB-UniRule"/>
</dbReference>
<dbReference type="GO" id="GO:0000105">
    <property type="term" value="P:L-histidine biosynthetic process"/>
    <property type="evidence" value="ECO:0007669"/>
    <property type="project" value="UniProtKB-UniRule"/>
</dbReference>
<dbReference type="CDD" id="cd07914">
    <property type="entry name" value="IGPD"/>
    <property type="match status" value="1"/>
</dbReference>
<dbReference type="FunFam" id="3.30.230.40:FF:000001">
    <property type="entry name" value="Imidazoleglycerol-phosphate dehydratase HisB"/>
    <property type="match status" value="1"/>
</dbReference>
<dbReference type="FunFam" id="3.30.230.40:FF:000003">
    <property type="entry name" value="Imidazoleglycerol-phosphate dehydratase HisB"/>
    <property type="match status" value="1"/>
</dbReference>
<dbReference type="Gene3D" id="3.30.230.40">
    <property type="entry name" value="Imidazole glycerol phosphate dehydratase, domain 1"/>
    <property type="match status" value="2"/>
</dbReference>
<dbReference type="HAMAP" id="MF_00076">
    <property type="entry name" value="HisB"/>
    <property type="match status" value="1"/>
</dbReference>
<dbReference type="InterPro" id="IPR038494">
    <property type="entry name" value="IGPD_sf"/>
</dbReference>
<dbReference type="InterPro" id="IPR000807">
    <property type="entry name" value="ImidazoleglycerolP_deHydtase"/>
</dbReference>
<dbReference type="InterPro" id="IPR020565">
    <property type="entry name" value="ImidazoleglycerP_deHydtase_CS"/>
</dbReference>
<dbReference type="InterPro" id="IPR020568">
    <property type="entry name" value="Ribosomal_Su5_D2-typ_SF"/>
</dbReference>
<dbReference type="NCBIfam" id="NF002107">
    <property type="entry name" value="PRK00951.1-2"/>
    <property type="match status" value="1"/>
</dbReference>
<dbReference type="NCBIfam" id="NF002111">
    <property type="entry name" value="PRK00951.2-1"/>
    <property type="match status" value="1"/>
</dbReference>
<dbReference type="NCBIfam" id="NF002114">
    <property type="entry name" value="PRK00951.2-4"/>
    <property type="match status" value="1"/>
</dbReference>
<dbReference type="PANTHER" id="PTHR23133:SF2">
    <property type="entry name" value="IMIDAZOLEGLYCEROL-PHOSPHATE DEHYDRATASE"/>
    <property type="match status" value="1"/>
</dbReference>
<dbReference type="PANTHER" id="PTHR23133">
    <property type="entry name" value="IMIDAZOLEGLYCEROL-PHOSPHATE DEHYDRATASE HIS7"/>
    <property type="match status" value="1"/>
</dbReference>
<dbReference type="Pfam" id="PF00475">
    <property type="entry name" value="IGPD"/>
    <property type="match status" value="1"/>
</dbReference>
<dbReference type="SUPFAM" id="SSF54211">
    <property type="entry name" value="Ribosomal protein S5 domain 2-like"/>
    <property type="match status" value="2"/>
</dbReference>
<dbReference type="PROSITE" id="PS00954">
    <property type="entry name" value="IGP_DEHYDRATASE_1"/>
    <property type="match status" value="1"/>
</dbReference>
<dbReference type="PROSITE" id="PS00955">
    <property type="entry name" value="IGP_DEHYDRATASE_2"/>
    <property type="match status" value="1"/>
</dbReference>
<name>HIS7_STAAE</name>
<organism>
    <name type="scientific">Staphylococcus aureus (strain Newman)</name>
    <dbReference type="NCBI Taxonomy" id="426430"/>
    <lineage>
        <taxon>Bacteria</taxon>
        <taxon>Bacillati</taxon>
        <taxon>Bacillota</taxon>
        <taxon>Bacilli</taxon>
        <taxon>Bacillales</taxon>
        <taxon>Staphylococcaceae</taxon>
        <taxon>Staphylococcus</taxon>
    </lineage>
</organism>
<gene>
    <name evidence="1" type="primary">hisB</name>
    <name type="ordered locus">NWMN_2574</name>
</gene>
<accession>A6QKG4</accession>
<keyword id="KW-0028">Amino-acid biosynthesis</keyword>
<keyword id="KW-0963">Cytoplasm</keyword>
<keyword id="KW-0368">Histidine biosynthesis</keyword>
<keyword id="KW-0456">Lyase</keyword>
<comment type="catalytic activity">
    <reaction evidence="1">
        <text>D-erythro-1-(imidazol-4-yl)glycerol 3-phosphate = 3-(imidazol-4-yl)-2-oxopropyl phosphate + H2O</text>
        <dbReference type="Rhea" id="RHEA:11040"/>
        <dbReference type="ChEBI" id="CHEBI:15377"/>
        <dbReference type="ChEBI" id="CHEBI:57766"/>
        <dbReference type="ChEBI" id="CHEBI:58278"/>
        <dbReference type="EC" id="4.2.1.19"/>
    </reaction>
</comment>
<comment type="pathway">
    <text evidence="1">Amino-acid biosynthesis; L-histidine biosynthesis; L-histidine from 5-phospho-alpha-D-ribose 1-diphosphate: step 6/9.</text>
</comment>
<comment type="subcellular location">
    <subcellularLocation>
        <location evidence="1">Cytoplasm</location>
    </subcellularLocation>
</comment>
<comment type="similarity">
    <text evidence="1">Belongs to the imidazoleglycerol-phosphate dehydratase family.</text>
</comment>